<dbReference type="EMBL" id="CP000438">
    <property type="protein sequence ID" value="ABJ12774.1"/>
    <property type="molecule type" value="Genomic_DNA"/>
</dbReference>
<dbReference type="SMR" id="Q02R10"/>
<dbReference type="KEGG" id="pau:PA14_18590"/>
<dbReference type="PseudoCAP" id="PA14_18590"/>
<dbReference type="HOGENOM" id="CLU_061989_0_0_6"/>
<dbReference type="BioCyc" id="PAER208963:G1G74-1530-MONOMER"/>
<dbReference type="Proteomes" id="UP000000653">
    <property type="component" value="Chromosome"/>
</dbReference>
<dbReference type="GO" id="GO:0005829">
    <property type="term" value="C:cytosol"/>
    <property type="evidence" value="ECO:0007669"/>
    <property type="project" value="TreeGrafter"/>
</dbReference>
<dbReference type="GO" id="GO:0033194">
    <property type="term" value="P:response to hydroperoxide"/>
    <property type="evidence" value="ECO:0007669"/>
    <property type="project" value="TreeGrafter"/>
</dbReference>
<dbReference type="HAMAP" id="MF_00652">
    <property type="entry name" value="UPF0246"/>
    <property type="match status" value="1"/>
</dbReference>
<dbReference type="InterPro" id="IPR005583">
    <property type="entry name" value="YaaA"/>
</dbReference>
<dbReference type="NCBIfam" id="NF002541">
    <property type="entry name" value="PRK02101.1-1"/>
    <property type="match status" value="1"/>
</dbReference>
<dbReference type="NCBIfam" id="NF002542">
    <property type="entry name" value="PRK02101.1-3"/>
    <property type="match status" value="1"/>
</dbReference>
<dbReference type="PANTHER" id="PTHR30283:SF4">
    <property type="entry name" value="PEROXIDE STRESS RESISTANCE PROTEIN YAAA"/>
    <property type="match status" value="1"/>
</dbReference>
<dbReference type="PANTHER" id="PTHR30283">
    <property type="entry name" value="PEROXIDE STRESS RESPONSE PROTEIN YAAA"/>
    <property type="match status" value="1"/>
</dbReference>
<dbReference type="Pfam" id="PF03883">
    <property type="entry name" value="H2O2_YaaD"/>
    <property type="match status" value="1"/>
</dbReference>
<protein>
    <recommendedName>
        <fullName evidence="1">UPF0246 protein PA14_18590</fullName>
    </recommendedName>
</protein>
<evidence type="ECO:0000255" key="1">
    <source>
        <dbReference type="HAMAP-Rule" id="MF_00652"/>
    </source>
</evidence>
<accession>Q02R10</accession>
<name>Y1859_PSEAB</name>
<gene>
    <name type="ordered locus">PA14_18590</name>
</gene>
<feature type="chain" id="PRO_1000061622" description="UPF0246 protein PA14_18590">
    <location>
        <begin position="1"/>
        <end position="259"/>
    </location>
</feature>
<comment type="similarity">
    <text evidence="1">Belongs to the UPF0246 family.</text>
</comment>
<organism>
    <name type="scientific">Pseudomonas aeruginosa (strain UCBPP-PA14)</name>
    <dbReference type="NCBI Taxonomy" id="208963"/>
    <lineage>
        <taxon>Bacteria</taxon>
        <taxon>Pseudomonadati</taxon>
        <taxon>Pseudomonadota</taxon>
        <taxon>Gammaproteobacteria</taxon>
        <taxon>Pseudomonadales</taxon>
        <taxon>Pseudomonadaceae</taxon>
        <taxon>Pseudomonas</taxon>
    </lineage>
</organism>
<proteinExistence type="inferred from homology"/>
<sequence length="259" mass="29508">MLMVISPAKTLDYETPPVTHRFTQPQYLDHAQELIQQLRQLTPLQISELMKLSDKLAGLNAARYASWHPEFTPENAKQALLAFKGDVYTGLNAEDFGEDDFAFAQDHLCMLSGLYGVLRPLDLMQPYRLEMGTRLANARGKDLYAFWGERISQWLNEALAAQGDDVLLNLASNEYFGAVKRKALQARVIDTEFKDLKNGQYKIISFYAKKARGMMARYVIRERLRDPAGLKDFNAHGYYFSAEQSGPDQLVFLRDAPQD</sequence>
<reference key="1">
    <citation type="journal article" date="2006" name="Genome Biol.">
        <title>Genomic analysis reveals that Pseudomonas aeruginosa virulence is combinatorial.</title>
        <authorList>
            <person name="Lee D.G."/>
            <person name="Urbach J.M."/>
            <person name="Wu G."/>
            <person name="Liberati N.T."/>
            <person name="Feinbaum R.L."/>
            <person name="Miyata S."/>
            <person name="Diggins L.T."/>
            <person name="He J."/>
            <person name="Saucier M."/>
            <person name="Deziel E."/>
            <person name="Friedman L."/>
            <person name="Li L."/>
            <person name="Grills G."/>
            <person name="Montgomery K."/>
            <person name="Kucherlapati R."/>
            <person name="Rahme L.G."/>
            <person name="Ausubel F.M."/>
        </authorList>
    </citation>
    <scope>NUCLEOTIDE SEQUENCE [LARGE SCALE GENOMIC DNA]</scope>
    <source>
        <strain>UCBPP-PA14</strain>
    </source>
</reference>